<accession>Q2QY12</accession>
<accession>A0A0P0Y711</accession>
<accession>Q0IQ91</accession>
<name>ACA9_ORYSJ</name>
<comment type="function">
    <text evidence="1">This magnesium-dependent enzyme catalyzes the hydrolysis of ATP coupled with the translocation of calcium from the cytosol out of the cell, into the endoplasmic reticulum, or into organelles.</text>
</comment>
<comment type="catalytic activity">
    <reaction>
        <text>Ca(2+)(in) + ATP + H2O = Ca(2+)(out) + ADP + phosphate + H(+)</text>
        <dbReference type="Rhea" id="RHEA:18105"/>
        <dbReference type="ChEBI" id="CHEBI:15377"/>
        <dbReference type="ChEBI" id="CHEBI:15378"/>
        <dbReference type="ChEBI" id="CHEBI:29108"/>
        <dbReference type="ChEBI" id="CHEBI:30616"/>
        <dbReference type="ChEBI" id="CHEBI:43474"/>
        <dbReference type="ChEBI" id="CHEBI:456216"/>
        <dbReference type="EC" id="7.2.2.10"/>
    </reaction>
</comment>
<comment type="activity regulation">
    <text evidence="1">Activated by calmodulin.</text>
</comment>
<comment type="subcellular location">
    <subcellularLocation>
        <location evidence="1">Membrane</location>
        <topology evidence="1">Multi-pass membrane protein</topology>
    </subcellularLocation>
</comment>
<comment type="domain">
    <text evidence="1">The N-terminus contains an autoinhibitory calmodulin-binding domain, which binds calmodulin in a calcium-dependent fashion.</text>
</comment>
<comment type="similarity">
    <text evidence="4">Belongs to the cation transport ATPase (P-type) (TC 3.A.3) family. Type IIB subfamily.</text>
</comment>
<keyword id="KW-0067">ATP-binding</keyword>
<keyword id="KW-0106">Calcium</keyword>
<keyword id="KW-0109">Calcium transport</keyword>
<keyword id="KW-0112">Calmodulin-binding</keyword>
<keyword id="KW-0406">Ion transport</keyword>
<keyword id="KW-0460">Magnesium</keyword>
<keyword id="KW-0472">Membrane</keyword>
<keyword id="KW-0479">Metal-binding</keyword>
<keyword id="KW-0547">Nucleotide-binding</keyword>
<keyword id="KW-0597">Phosphoprotein</keyword>
<keyword id="KW-1185">Reference proteome</keyword>
<keyword id="KW-1278">Translocase</keyword>
<keyword id="KW-0812">Transmembrane</keyword>
<keyword id="KW-1133">Transmembrane helix</keyword>
<keyword id="KW-0813">Transport</keyword>
<gene>
    <name evidence="3" type="primary">ACA9</name>
    <name evidence="6" type="ordered locus">Os12g0136900</name>
    <name evidence="5" type="ordered locus">LOC_Os12g04220</name>
    <name evidence="7" type="ORF">OsJ_35157</name>
</gene>
<proteinExistence type="inferred from homology"/>
<evidence type="ECO:0000250" key="1"/>
<evidence type="ECO:0000255" key="2"/>
<evidence type="ECO:0000303" key="3">
    <source>
    </source>
</evidence>
<evidence type="ECO:0000305" key="4"/>
<evidence type="ECO:0000312" key="5">
    <source>
        <dbReference type="EMBL" id="ABA95758.1"/>
    </source>
</evidence>
<evidence type="ECO:0000312" key="6">
    <source>
        <dbReference type="EMBL" id="BAF29124.1"/>
    </source>
</evidence>
<evidence type="ECO:0000312" key="7">
    <source>
        <dbReference type="EMBL" id="EAZ19580.1"/>
    </source>
</evidence>
<organism>
    <name type="scientific">Oryza sativa subsp. japonica</name>
    <name type="common">Rice</name>
    <dbReference type="NCBI Taxonomy" id="39947"/>
    <lineage>
        <taxon>Eukaryota</taxon>
        <taxon>Viridiplantae</taxon>
        <taxon>Streptophyta</taxon>
        <taxon>Embryophyta</taxon>
        <taxon>Tracheophyta</taxon>
        <taxon>Spermatophyta</taxon>
        <taxon>Magnoliopsida</taxon>
        <taxon>Liliopsida</taxon>
        <taxon>Poales</taxon>
        <taxon>Poaceae</taxon>
        <taxon>BOP clade</taxon>
        <taxon>Oryzoideae</taxon>
        <taxon>Oryzeae</taxon>
        <taxon>Oryzinae</taxon>
        <taxon>Oryza</taxon>
        <taxon>Oryza sativa</taxon>
    </lineage>
</organism>
<sequence>MEKLDRYLQENFDVPAKNPSEEAQRRWRQAVGTIVKNRRRRFRWVPDLERRSLDKAKVRSTQEKIRVALYVQQAALIFSDGAKKKEYKLTGDIIKAGYAINPDELALITSKHDSKALKMHGGVDGISIKVRSSFDHGIYASELDTRQNIYGVNRYAEKPSRSFWMFVWDALQDMTLIILMVCALLSVAVGLATEGWPKGMYDGLGIILSIFLVVMVTAVSDYKQSLQFKELDNEKKKIFIHVTRDGRRQKISIYDLVVGDIVHLSIGDQVPADGLYIHGYSLLIDESSLSGESDPVYVSQDKPFILAGTKVQDGSAKMIVTAVGMRTEWGKLMSTLSEGGEDETPLQVKLNGVATIIGKIGLVFAILTFLVLLVRFLIDKGMTVGLLKWYSTDALTIVNYFATAVTIIVVAVPEGLPLAVTLSLAFAMKKLMNDKALVRHLSACETMGSAGTICTDKTGTLTTNHMVVDKIWISEVSKSVTSNTISGELNSVVSSSTLSLLLQGIFENTSAEVVKEKDGKQTVLGTPTERAILEFGLGLKGDHDAEYRACTKVKVEPFNSVKKKMAVLISLPNGTSRWFCKGASEIILQMCDMMVDGDGNAIPLSEAQRKNILDTINSFASDALRTLCLAYKEVDDDIDDNADSPTSGFTLIAIFGIKDPVRPGVKDAVKTCMSAGITVRMVTGDNINTAKAIAKECGILTEDGVAIEGPEFHSKSTEEMRDLILNIQVMARSLPLDKHTLVTNLRGMFDEVVSVTGDGTNDAPALHEADIGLAMGIAGTEVAKESADVIVLDDNFTTIINVARWGRAVYINIQKFVQFQLTVNIVALVINFVSACIIGSAPLTAVQLLWVNMIMDTLGALALATEPPNDEMMKRPPVRKGESFITKFMWRNIMGQSLYQLFVLGALMFGGERLLNIKGADSKSIINTLIFNSFVFCQVFNEINSREMQKINVFRGIISNWIFIAVIAATVAFQVVIIEFLGTFASTVPLNWQHWLLSVGLGSISLIVGVILKCIPVGSGETSATPNGYRPLANGPDDI</sequence>
<dbReference type="EC" id="7.2.2.10"/>
<dbReference type="EMBL" id="BX000502">
    <property type="status" value="NOT_ANNOTATED_CDS"/>
    <property type="molecule type" value="Genomic_DNA"/>
</dbReference>
<dbReference type="EMBL" id="DP000011">
    <property type="protein sequence ID" value="ABA95758.1"/>
    <property type="molecule type" value="Genomic_DNA"/>
</dbReference>
<dbReference type="EMBL" id="AP008218">
    <property type="protein sequence ID" value="BAF29124.1"/>
    <property type="molecule type" value="Genomic_DNA"/>
</dbReference>
<dbReference type="EMBL" id="AP014968">
    <property type="protein sequence ID" value="BAT15803.1"/>
    <property type="molecule type" value="Genomic_DNA"/>
</dbReference>
<dbReference type="EMBL" id="CM000149">
    <property type="protein sequence ID" value="EAZ19580.1"/>
    <property type="molecule type" value="Genomic_DNA"/>
</dbReference>
<dbReference type="RefSeq" id="XP_015620481.1">
    <property type="nucleotide sequence ID" value="XM_015764995.1"/>
</dbReference>
<dbReference type="SMR" id="Q2QY12"/>
<dbReference type="FunCoup" id="Q2QY12">
    <property type="interactions" value="2759"/>
</dbReference>
<dbReference type="STRING" id="39947.Q2QY12"/>
<dbReference type="PaxDb" id="39947-Q2QY12"/>
<dbReference type="EnsemblPlants" id="Os12t0136900-00">
    <property type="protein sequence ID" value="Os12t0136900-00"/>
    <property type="gene ID" value="Os12g0136900"/>
</dbReference>
<dbReference type="Gramene" id="Os12t0136900-00">
    <property type="protein sequence ID" value="Os12t0136900-00"/>
    <property type="gene ID" value="Os12g0136900"/>
</dbReference>
<dbReference type="KEGG" id="dosa:Os12g0136900"/>
<dbReference type="eggNOG" id="KOG0204">
    <property type="taxonomic scope" value="Eukaryota"/>
</dbReference>
<dbReference type="HOGENOM" id="CLU_002360_9_2_1"/>
<dbReference type="InParanoid" id="Q2QY12"/>
<dbReference type="OMA" id="YRMYVKG"/>
<dbReference type="OrthoDB" id="3352408at2759"/>
<dbReference type="Proteomes" id="UP000000763">
    <property type="component" value="Chromosome 12"/>
</dbReference>
<dbReference type="Proteomes" id="UP000007752">
    <property type="component" value="Chromosome 12"/>
</dbReference>
<dbReference type="Proteomes" id="UP000059680">
    <property type="component" value="Chromosome 12"/>
</dbReference>
<dbReference type="GO" id="GO:0043231">
    <property type="term" value="C:intracellular membrane-bounded organelle"/>
    <property type="evidence" value="ECO:0000318"/>
    <property type="project" value="GO_Central"/>
</dbReference>
<dbReference type="GO" id="GO:0005886">
    <property type="term" value="C:plasma membrane"/>
    <property type="evidence" value="ECO:0000318"/>
    <property type="project" value="GO_Central"/>
</dbReference>
<dbReference type="GO" id="GO:0005524">
    <property type="term" value="F:ATP binding"/>
    <property type="evidence" value="ECO:0007669"/>
    <property type="project" value="UniProtKB-KW"/>
</dbReference>
<dbReference type="GO" id="GO:0016887">
    <property type="term" value="F:ATP hydrolysis activity"/>
    <property type="evidence" value="ECO:0007669"/>
    <property type="project" value="InterPro"/>
</dbReference>
<dbReference type="GO" id="GO:0005516">
    <property type="term" value="F:calmodulin binding"/>
    <property type="evidence" value="ECO:0007669"/>
    <property type="project" value="UniProtKB-KW"/>
</dbReference>
<dbReference type="GO" id="GO:0046872">
    <property type="term" value="F:metal ion binding"/>
    <property type="evidence" value="ECO:0007669"/>
    <property type="project" value="UniProtKB-KW"/>
</dbReference>
<dbReference type="GO" id="GO:0005388">
    <property type="term" value="F:P-type calcium transporter activity"/>
    <property type="evidence" value="ECO:0000318"/>
    <property type="project" value="GO_Central"/>
</dbReference>
<dbReference type="CDD" id="cd02081">
    <property type="entry name" value="P-type_ATPase_Ca_PMCA-like"/>
    <property type="match status" value="1"/>
</dbReference>
<dbReference type="FunFam" id="1.20.1110.10:FF:000036">
    <property type="entry name" value="Calcium-transporting ATPase"/>
    <property type="match status" value="1"/>
</dbReference>
<dbReference type="FunFam" id="1.20.1110.10:FF:000039">
    <property type="entry name" value="Calcium-transporting ATPase"/>
    <property type="match status" value="1"/>
</dbReference>
<dbReference type="FunFam" id="1.20.5.170:FF:000026">
    <property type="entry name" value="Calcium-transporting ATPase"/>
    <property type="match status" value="1"/>
</dbReference>
<dbReference type="FunFam" id="2.70.150.10:FF:000006">
    <property type="entry name" value="Calcium-transporting ATPase"/>
    <property type="match status" value="1"/>
</dbReference>
<dbReference type="FunFam" id="3.40.1110.10:FF:000011">
    <property type="entry name" value="Calcium-transporting ATPase"/>
    <property type="match status" value="1"/>
</dbReference>
<dbReference type="FunFam" id="3.40.50.1000:FF:000011">
    <property type="entry name" value="Calcium-transporting ATPase"/>
    <property type="match status" value="1"/>
</dbReference>
<dbReference type="Gene3D" id="1.20.5.170">
    <property type="match status" value="1"/>
</dbReference>
<dbReference type="Gene3D" id="3.40.1110.10">
    <property type="entry name" value="Calcium-transporting ATPase, cytoplasmic domain N"/>
    <property type="match status" value="1"/>
</dbReference>
<dbReference type="Gene3D" id="2.70.150.10">
    <property type="entry name" value="Calcium-transporting ATPase, cytoplasmic transduction domain A"/>
    <property type="match status" value="1"/>
</dbReference>
<dbReference type="Gene3D" id="1.20.1110.10">
    <property type="entry name" value="Calcium-transporting ATPase, transmembrane domain"/>
    <property type="match status" value="1"/>
</dbReference>
<dbReference type="Gene3D" id="3.40.50.1000">
    <property type="entry name" value="HAD superfamily/HAD-like"/>
    <property type="match status" value="1"/>
</dbReference>
<dbReference type="InterPro" id="IPR006068">
    <property type="entry name" value="ATPase_P-typ_cation-transptr_C"/>
</dbReference>
<dbReference type="InterPro" id="IPR004014">
    <property type="entry name" value="ATPase_P-typ_cation-transptr_N"/>
</dbReference>
<dbReference type="InterPro" id="IPR023299">
    <property type="entry name" value="ATPase_P-typ_cyto_dom_N"/>
</dbReference>
<dbReference type="InterPro" id="IPR018303">
    <property type="entry name" value="ATPase_P-typ_P_site"/>
</dbReference>
<dbReference type="InterPro" id="IPR023298">
    <property type="entry name" value="ATPase_P-typ_TM_dom_sf"/>
</dbReference>
<dbReference type="InterPro" id="IPR008250">
    <property type="entry name" value="ATPase_P-typ_transduc_dom_A_sf"/>
</dbReference>
<dbReference type="InterPro" id="IPR024750">
    <property type="entry name" value="Ca_ATPase_N_dom"/>
</dbReference>
<dbReference type="InterPro" id="IPR036412">
    <property type="entry name" value="HAD-like_sf"/>
</dbReference>
<dbReference type="InterPro" id="IPR023214">
    <property type="entry name" value="HAD_sf"/>
</dbReference>
<dbReference type="InterPro" id="IPR006408">
    <property type="entry name" value="P-type_ATPase_IIB"/>
</dbReference>
<dbReference type="InterPro" id="IPR001757">
    <property type="entry name" value="P_typ_ATPase"/>
</dbReference>
<dbReference type="InterPro" id="IPR044492">
    <property type="entry name" value="P_typ_ATPase_HD_dom"/>
</dbReference>
<dbReference type="NCBIfam" id="TIGR01517">
    <property type="entry name" value="ATPase-IIB_Ca"/>
    <property type="match status" value="1"/>
</dbReference>
<dbReference type="NCBIfam" id="TIGR01494">
    <property type="entry name" value="ATPase_P-type"/>
    <property type="match status" value="2"/>
</dbReference>
<dbReference type="PANTHER" id="PTHR24093:SF462">
    <property type="entry name" value="CALCIUM-TRANSPORTING ATPASE 11, PLASMA MEMBRANE-TYPE-RELATED"/>
    <property type="match status" value="1"/>
</dbReference>
<dbReference type="PANTHER" id="PTHR24093">
    <property type="entry name" value="CATION TRANSPORTING ATPASE"/>
    <property type="match status" value="1"/>
</dbReference>
<dbReference type="Pfam" id="PF12515">
    <property type="entry name" value="CaATP_NAI"/>
    <property type="match status" value="1"/>
</dbReference>
<dbReference type="Pfam" id="PF13246">
    <property type="entry name" value="Cation_ATPase"/>
    <property type="match status" value="1"/>
</dbReference>
<dbReference type="Pfam" id="PF00689">
    <property type="entry name" value="Cation_ATPase_C"/>
    <property type="match status" value="1"/>
</dbReference>
<dbReference type="Pfam" id="PF00690">
    <property type="entry name" value="Cation_ATPase_N"/>
    <property type="match status" value="1"/>
</dbReference>
<dbReference type="Pfam" id="PF00122">
    <property type="entry name" value="E1-E2_ATPase"/>
    <property type="match status" value="1"/>
</dbReference>
<dbReference type="PRINTS" id="PR00119">
    <property type="entry name" value="CATATPASE"/>
</dbReference>
<dbReference type="PRINTS" id="PR00120">
    <property type="entry name" value="HATPASE"/>
</dbReference>
<dbReference type="SFLD" id="SFLDS00003">
    <property type="entry name" value="Haloacid_Dehalogenase"/>
    <property type="match status" value="1"/>
</dbReference>
<dbReference type="SFLD" id="SFLDF00027">
    <property type="entry name" value="p-type_atpase"/>
    <property type="match status" value="1"/>
</dbReference>
<dbReference type="SMART" id="SM00831">
    <property type="entry name" value="Cation_ATPase_N"/>
    <property type="match status" value="1"/>
</dbReference>
<dbReference type="SUPFAM" id="SSF81653">
    <property type="entry name" value="Calcium ATPase, transduction domain A"/>
    <property type="match status" value="1"/>
</dbReference>
<dbReference type="SUPFAM" id="SSF81665">
    <property type="entry name" value="Calcium ATPase, transmembrane domain M"/>
    <property type="match status" value="1"/>
</dbReference>
<dbReference type="SUPFAM" id="SSF56784">
    <property type="entry name" value="HAD-like"/>
    <property type="match status" value="1"/>
</dbReference>
<dbReference type="SUPFAM" id="SSF81660">
    <property type="entry name" value="Metal cation-transporting ATPase, ATP-binding domain N"/>
    <property type="match status" value="1"/>
</dbReference>
<dbReference type="PROSITE" id="PS00154">
    <property type="entry name" value="ATPASE_E1_E2"/>
    <property type="match status" value="1"/>
</dbReference>
<reference key="1">
    <citation type="journal article" date="2005" name="BMC Biol.">
        <title>The sequence of rice chromosomes 11 and 12, rich in disease resistance genes and recent gene duplications.</title>
        <authorList>
            <consortium name="The rice chromosomes 11 and 12 sequencing consortia"/>
        </authorList>
    </citation>
    <scope>NUCLEOTIDE SEQUENCE [LARGE SCALE GENOMIC DNA]</scope>
    <source>
        <strain>cv. Nipponbare</strain>
    </source>
</reference>
<reference key="2">
    <citation type="journal article" date="2005" name="Nature">
        <title>The map-based sequence of the rice genome.</title>
        <authorList>
            <consortium name="International rice genome sequencing project (IRGSP)"/>
        </authorList>
    </citation>
    <scope>NUCLEOTIDE SEQUENCE [LARGE SCALE GENOMIC DNA]</scope>
    <source>
        <strain>cv. Nipponbare</strain>
    </source>
</reference>
<reference key="3">
    <citation type="journal article" date="2008" name="Nucleic Acids Res.">
        <title>The rice annotation project database (RAP-DB): 2008 update.</title>
        <authorList>
            <consortium name="The rice annotation project (RAP)"/>
        </authorList>
    </citation>
    <scope>GENOME REANNOTATION</scope>
    <source>
        <strain>cv. Nipponbare</strain>
    </source>
</reference>
<reference key="4">
    <citation type="journal article" date="2013" name="Rice">
        <title>Improvement of the Oryza sativa Nipponbare reference genome using next generation sequence and optical map data.</title>
        <authorList>
            <person name="Kawahara Y."/>
            <person name="de la Bastide M."/>
            <person name="Hamilton J.P."/>
            <person name="Kanamori H."/>
            <person name="McCombie W.R."/>
            <person name="Ouyang S."/>
            <person name="Schwartz D.C."/>
            <person name="Tanaka T."/>
            <person name="Wu J."/>
            <person name="Zhou S."/>
            <person name="Childs K.L."/>
            <person name="Davidson R.M."/>
            <person name="Lin H."/>
            <person name="Quesada-Ocampo L."/>
            <person name="Vaillancourt B."/>
            <person name="Sakai H."/>
            <person name="Lee S.S."/>
            <person name="Kim J."/>
            <person name="Numa H."/>
            <person name="Itoh T."/>
            <person name="Buell C.R."/>
            <person name="Matsumoto T."/>
        </authorList>
    </citation>
    <scope>GENOME REANNOTATION</scope>
    <source>
        <strain>cv. Nipponbare</strain>
    </source>
</reference>
<reference key="5">
    <citation type="journal article" date="2005" name="PLoS Biol.">
        <title>The genomes of Oryza sativa: a history of duplications.</title>
        <authorList>
            <person name="Yu J."/>
            <person name="Wang J."/>
            <person name="Lin W."/>
            <person name="Li S."/>
            <person name="Li H."/>
            <person name="Zhou J."/>
            <person name="Ni P."/>
            <person name="Dong W."/>
            <person name="Hu S."/>
            <person name="Zeng C."/>
            <person name="Zhang J."/>
            <person name="Zhang Y."/>
            <person name="Li R."/>
            <person name="Xu Z."/>
            <person name="Li S."/>
            <person name="Li X."/>
            <person name="Zheng H."/>
            <person name="Cong L."/>
            <person name="Lin L."/>
            <person name="Yin J."/>
            <person name="Geng J."/>
            <person name="Li G."/>
            <person name="Shi J."/>
            <person name="Liu J."/>
            <person name="Lv H."/>
            <person name="Li J."/>
            <person name="Wang J."/>
            <person name="Deng Y."/>
            <person name="Ran L."/>
            <person name="Shi X."/>
            <person name="Wang X."/>
            <person name="Wu Q."/>
            <person name="Li C."/>
            <person name="Ren X."/>
            <person name="Wang J."/>
            <person name="Wang X."/>
            <person name="Li D."/>
            <person name="Liu D."/>
            <person name="Zhang X."/>
            <person name="Ji Z."/>
            <person name="Zhao W."/>
            <person name="Sun Y."/>
            <person name="Zhang Z."/>
            <person name="Bao J."/>
            <person name="Han Y."/>
            <person name="Dong L."/>
            <person name="Ji J."/>
            <person name="Chen P."/>
            <person name="Wu S."/>
            <person name="Liu J."/>
            <person name="Xiao Y."/>
            <person name="Bu D."/>
            <person name="Tan J."/>
            <person name="Yang L."/>
            <person name="Ye C."/>
            <person name="Zhang J."/>
            <person name="Xu J."/>
            <person name="Zhou Y."/>
            <person name="Yu Y."/>
            <person name="Zhang B."/>
            <person name="Zhuang S."/>
            <person name="Wei H."/>
            <person name="Liu B."/>
            <person name="Lei M."/>
            <person name="Yu H."/>
            <person name="Li Y."/>
            <person name="Xu H."/>
            <person name="Wei S."/>
            <person name="He X."/>
            <person name="Fang L."/>
            <person name="Zhang Z."/>
            <person name="Zhang Y."/>
            <person name="Huang X."/>
            <person name="Su Z."/>
            <person name="Tong W."/>
            <person name="Li J."/>
            <person name="Tong Z."/>
            <person name="Li S."/>
            <person name="Ye J."/>
            <person name="Wang L."/>
            <person name="Fang L."/>
            <person name="Lei T."/>
            <person name="Chen C.-S."/>
            <person name="Chen H.-C."/>
            <person name="Xu Z."/>
            <person name="Li H."/>
            <person name="Huang H."/>
            <person name="Zhang F."/>
            <person name="Xu H."/>
            <person name="Li N."/>
            <person name="Zhao C."/>
            <person name="Li S."/>
            <person name="Dong L."/>
            <person name="Huang Y."/>
            <person name="Li L."/>
            <person name="Xi Y."/>
            <person name="Qi Q."/>
            <person name="Li W."/>
            <person name="Zhang B."/>
            <person name="Hu W."/>
            <person name="Zhang Y."/>
            <person name="Tian X."/>
            <person name="Jiao Y."/>
            <person name="Liang X."/>
            <person name="Jin J."/>
            <person name="Gao L."/>
            <person name="Zheng W."/>
            <person name="Hao B."/>
            <person name="Liu S.-M."/>
            <person name="Wang W."/>
            <person name="Yuan L."/>
            <person name="Cao M."/>
            <person name="McDermott J."/>
            <person name="Samudrala R."/>
            <person name="Wang J."/>
            <person name="Wong G.K.-S."/>
            <person name="Yang H."/>
        </authorList>
    </citation>
    <scope>NUCLEOTIDE SEQUENCE [LARGE SCALE GENOMIC DNA]</scope>
    <source>
        <strain>cv. Nipponbare</strain>
    </source>
</reference>
<reference key="6">
    <citation type="journal article" date="2014" name="FEBS J.">
        <title>Genome-wide expressional and functional analysis of calcium transport elements during abiotic stress and development in rice.</title>
        <authorList>
            <person name="Singh A."/>
            <person name="Kanwar P."/>
            <person name="Yadav A.K."/>
            <person name="Mishra M."/>
            <person name="Jha S.K."/>
            <person name="Baranwal V."/>
            <person name="Pandey A."/>
            <person name="Kapoor S."/>
            <person name="Tyagi A.K."/>
            <person name="Pandey G.K."/>
        </authorList>
    </citation>
    <scope>GENE FAMILY</scope>
    <scope>NOMENCLATURE</scope>
</reference>
<feature type="chain" id="PRO_0000247303" description="Probable calcium-transporting ATPase 9, plasma membrane-type">
    <location>
        <begin position="1"/>
        <end position="1039"/>
    </location>
</feature>
<feature type="topological domain" description="Cytoplasmic" evidence="2">
    <location>
        <begin position="1"/>
        <end position="175"/>
    </location>
</feature>
<feature type="transmembrane region" description="Helical" evidence="2">
    <location>
        <begin position="176"/>
        <end position="196"/>
    </location>
</feature>
<feature type="transmembrane region" description="Helical" evidence="2">
    <location>
        <begin position="199"/>
        <end position="219"/>
    </location>
</feature>
<feature type="topological domain" description="Cytoplasmic" evidence="2">
    <location>
        <begin position="220"/>
        <end position="250"/>
    </location>
</feature>
<feature type="transmembrane region" description="Helical" evidence="2">
    <location>
        <begin position="251"/>
        <end position="271"/>
    </location>
</feature>
<feature type="transmembrane region" description="Helical" evidence="2">
    <location>
        <begin position="353"/>
        <end position="373"/>
    </location>
</feature>
<feature type="topological domain" description="Cytoplasmic" evidence="2">
    <location>
        <begin position="374"/>
        <end position="406"/>
    </location>
</feature>
<feature type="transmembrane region" description="Helical" evidence="2">
    <location>
        <begin position="407"/>
        <end position="427"/>
    </location>
</feature>
<feature type="transmembrane region" description="Helical" evidence="2">
    <location>
        <begin position="825"/>
        <end position="845"/>
    </location>
</feature>
<feature type="topological domain" description="Cytoplasmic" evidence="2">
    <location>
        <begin position="846"/>
        <end position="847"/>
    </location>
</feature>
<feature type="transmembrane region" description="Helical" evidence="2">
    <location>
        <begin position="848"/>
        <end position="868"/>
    </location>
</feature>
<feature type="transmembrane region" description="Helical" evidence="2">
    <location>
        <begin position="892"/>
        <end position="912"/>
    </location>
</feature>
<feature type="topological domain" description="Cytoplasmic" evidence="2">
    <location>
        <begin position="913"/>
        <end position="960"/>
    </location>
</feature>
<feature type="transmembrane region" description="Helical" evidence="2">
    <location>
        <begin position="961"/>
        <end position="981"/>
    </location>
</feature>
<feature type="transmembrane region" description="Helical" evidence="2">
    <location>
        <begin position="995"/>
        <end position="1015"/>
    </location>
</feature>
<feature type="topological domain" description="Cytoplasmic" evidence="2">
    <location>
        <begin position="1016"/>
        <end position="1039"/>
    </location>
</feature>
<feature type="active site" description="4-aspartylphosphate intermediate" evidence="1">
    <location>
        <position position="456"/>
    </location>
</feature>
<feature type="binding site" evidence="1">
    <location>
        <position position="758"/>
    </location>
    <ligand>
        <name>Mg(2+)</name>
        <dbReference type="ChEBI" id="CHEBI:18420"/>
    </ligand>
</feature>
<feature type="binding site" evidence="1">
    <location>
        <position position="762"/>
    </location>
    <ligand>
        <name>Mg(2+)</name>
        <dbReference type="ChEBI" id="CHEBI:18420"/>
    </ligand>
</feature>
<protein>
    <recommendedName>
        <fullName evidence="4">Probable calcium-transporting ATPase 9, plasma membrane-type</fullName>
        <shortName evidence="3">OsACA9</shortName>
        <ecNumber>7.2.2.10</ecNumber>
    </recommendedName>
    <alternativeName>
        <fullName evidence="4">Ca(2+)-ATPase isoform 9</fullName>
    </alternativeName>
</protein>